<organism>
    <name type="scientific">Mus musculus</name>
    <name type="common">Mouse</name>
    <dbReference type="NCBI Taxonomy" id="10090"/>
    <lineage>
        <taxon>Eukaryota</taxon>
        <taxon>Metazoa</taxon>
        <taxon>Chordata</taxon>
        <taxon>Craniata</taxon>
        <taxon>Vertebrata</taxon>
        <taxon>Euteleostomi</taxon>
        <taxon>Mammalia</taxon>
        <taxon>Eutheria</taxon>
        <taxon>Euarchontoglires</taxon>
        <taxon>Glires</taxon>
        <taxon>Rodentia</taxon>
        <taxon>Myomorpha</taxon>
        <taxon>Muroidea</taxon>
        <taxon>Muridae</taxon>
        <taxon>Murinae</taxon>
        <taxon>Mus</taxon>
        <taxon>Mus</taxon>
    </lineage>
</organism>
<keyword id="KW-0175">Coiled coil</keyword>
<keyword id="KW-0403">Intermediate filament</keyword>
<keyword id="KW-0416">Keratin</keyword>
<keyword id="KW-1185">Reference proteome</keyword>
<protein>
    <recommendedName>
        <fullName>Keratin, type I cuticular Ha1</fullName>
    </recommendedName>
    <alternativeName>
        <fullName>HKA-1</fullName>
    </alternativeName>
    <alternativeName>
        <fullName>Hair keratin, type I Ha1</fullName>
    </alternativeName>
    <alternativeName>
        <fullName>Keratin-31</fullName>
        <shortName>K31</shortName>
    </alternativeName>
</protein>
<dbReference type="EMBL" id="M27734">
    <property type="protein sequence ID" value="AAA39372.1"/>
    <property type="molecule type" value="mRNA"/>
</dbReference>
<dbReference type="EMBL" id="AL592545">
    <property type="status" value="NOT_ANNOTATED_CDS"/>
    <property type="molecule type" value="Genomic_DNA"/>
</dbReference>
<dbReference type="CCDS" id="CCDS25405.1"/>
<dbReference type="PIR" id="A46559">
    <property type="entry name" value="A46559"/>
</dbReference>
<dbReference type="PIR" id="A61404">
    <property type="entry name" value="A61404"/>
</dbReference>
<dbReference type="RefSeq" id="NP_034789.2">
    <property type="nucleotide sequence ID" value="NM_010659.2"/>
</dbReference>
<dbReference type="SMR" id="Q61765"/>
<dbReference type="BioGRID" id="201016">
    <property type="interactions" value="5"/>
</dbReference>
<dbReference type="FunCoup" id="Q61765">
    <property type="interactions" value="162"/>
</dbReference>
<dbReference type="STRING" id="10090.ENSMUSP00000007318"/>
<dbReference type="iPTMnet" id="Q61765"/>
<dbReference type="PhosphoSitePlus" id="Q61765"/>
<dbReference type="SwissPalm" id="Q61765"/>
<dbReference type="jPOST" id="Q61765"/>
<dbReference type="PaxDb" id="10090-ENSMUSP00000007318"/>
<dbReference type="PeptideAtlas" id="Q61765"/>
<dbReference type="ProteomicsDB" id="268940"/>
<dbReference type="DNASU" id="16660"/>
<dbReference type="Ensembl" id="ENSMUST00000007318.2">
    <property type="protein sequence ID" value="ENSMUSP00000007318.2"/>
    <property type="gene ID" value="ENSMUSG00000048981.2"/>
</dbReference>
<dbReference type="GeneID" id="16660"/>
<dbReference type="KEGG" id="mmu:16660"/>
<dbReference type="UCSC" id="uc007lkd.1">
    <property type="organism name" value="mouse"/>
</dbReference>
<dbReference type="AGR" id="MGI:1309993"/>
<dbReference type="CTD" id="3881"/>
<dbReference type="MGI" id="MGI:1309993">
    <property type="gene designation" value="Krt31"/>
</dbReference>
<dbReference type="VEuPathDB" id="HostDB:ENSMUSG00000048981"/>
<dbReference type="eggNOG" id="ENOG502SNBF">
    <property type="taxonomic scope" value="Eukaryota"/>
</dbReference>
<dbReference type="GeneTree" id="ENSGT00940000153980"/>
<dbReference type="HOGENOM" id="CLU_012560_8_0_1"/>
<dbReference type="InParanoid" id="Q61765"/>
<dbReference type="OMA" id="CVPRTRC"/>
<dbReference type="OrthoDB" id="2441647at2759"/>
<dbReference type="PhylomeDB" id="Q61765"/>
<dbReference type="TreeFam" id="TF332742"/>
<dbReference type="Reactome" id="R-MMU-6805567">
    <property type="pathway name" value="Keratinization"/>
</dbReference>
<dbReference type="Reactome" id="R-MMU-6809371">
    <property type="pathway name" value="Formation of the cornified envelope"/>
</dbReference>
<dbReference type="BioGRID-ORCS" id="16660">
    <property type="hits" value="3 hits in 76 CRISPR screens"/>
</dbReference>
<dbReference type="PRO" id="PR:Q61765"/>
<dbReference type="Proteomes" id="UP000000589">
    <property type="component" value="Chromosome 11"/>
</dbReference>
<dbReference type="RNAct" id="Q61765">
    <property type="molecule type" value="protein"/>
</dbReference>
<dbReference type="Bgee" id="ENSMUSG00000048981">
    <property type="expression patterns" value="Expressed in lip and 23 other cell types or tissues"/>
</dbReference>
<dbReference type="GO" id="GO:0005882">
    <property type="term" value="C:intermediate filament"/>
    <property type="evidence" value="ECO:0007669"/>
    <property type="project" value="UniProtKB-KW"/>
</dbReference>
<dbReference type="GO" id="GO:0005198">
    <property type="term" value="F:structural molecule activity"/>
    <property type="evidence" value="ECO:0007669"/>
    <property type="project" value="InterPro"/>
</dbReference>
<dbReference type="FunFam" id="1.20.5.1160:FF:000002">
    <property type="entry name" value="Type I keratin 10"/>
    <property type="match status" value="1"/>
</dbReference>
<dbReference type="FunFam" id="1.20.5.170:FF:000002">
    <property type="entry name" value="Type I keratin KA11"/>
    <property type="match status" value="1"/>
</dbReference>
<dbReference type="FunFam" id="1.20.5.500:FF:000001">
    <property type="entry name" value="Type II keratin 23"/>
    <property type="match status" value="1"/>
</dbReference>
<dbReference type="Gene3D" id="1.20.5.170">
    <property type="match status" value="1"/>
</dbReference>
<dbReference type="Gene3D" id="1.20.5.500">
    <property type="entry name" value="Single helix bin"/>
    <property type="match status" value="1"/>
</dbReference>
<dbReference type="Gene3D" id="1.20.5.1160">
    <property type="entry name" value="Vasodilator-stimulated phosphoprotein"/>
    <property type="match status" value="1"/>
</dbReference>
<dbReference type="InterPro" id="IPR018039">
    <property type="entry name" value="IF_conserved"/>
</dbReference>
<dbReference type="InterPro" id="IPR039008">
    <property type="entry name" value="IF_rod_dom"/>
</dbReference>
<dbReference type="InterPro" id="IPR002957">
    <property type="entry name" value="Keratin_I"/>
</dbReference>
<dbReference type="PANTHER" id="PTHR23239">
    <property type="entry name" value="INTERMEDIATE FILAMENT"/>
    <property type="match status" value="1"/>
</dbReference>
<dbReference type="PANTHER" id="PTHR23239:SF394">
    <property type="entry name" value="KERATIN, TYPE I CUTICULAR HA1-RELATED"/>
    <property type="match status" value="1"/>
</dbReference>
<dbReference type="Pfam" id="PF00038">
    <property type="entry name" value="Filament"/>
    <property type="match status" value="1"/>
</dbReference>
<dbReference type="PRINTS" id="PR01248">
    <property type="entry name" value="TYPE1KERATIN"/>
</dbReference>
<dbReference type="SMART" id="SM01391">
    <property type="entry name" value="Filament"/>
    <property type="match status" value="1"/>
</dbReference>
<dbReference type="SUPFAM" id="SSF64593">
    <property type="entry name" value="Intermediate filament protein, coiled coil region"/>
    <property type="match status" value="2"/>
</dbReference>
<dbReference type="SUPFAM" id="SSF46579">
    <property type="entry name" value="Prefoldin"/>
    <property type="match status" value="1"/>
</dbReference>
<dbReference type="PROSITE" id="PS00226">
    <property type="entry name" value="IF_ROD_1"/>
    <property type="match status" value="1"/>
</dbReference>
<dbReference type="PROSITE" id="PS51842">
    <property type="entry name" value="IF_ROD_2"/>
    <property type="match status" value="1"/>
</dbReference>
<comment type="miscellaneous">
    <text>There are two types of hair/microfibrillar keratin, I (acidic) and II (neutral to basic).</text>
</comment>
<comment type="similarity">
    <text evidence="1">Belongs to the intermediate filament family.</text>
</comment>
<feature type="chain" id="PRO_0000063685" description="Keratin, type I cuticular Ha1">
    <location>
        <begin position="1"/>
        <end position="416"/>
    </location>
</feature>
<feature type="domain" description="IF rod" evidence="1">
    <location>
        <begin position="56"/>
        <end position="367"/>
    </location>
</feature>
<feature type="region of interest" description="Head">
    <location>
        <begin position="2"/>
        <end position="56"/>
    </location>
</feature>
<feature type="region of interest" description="Coil 1A">
    <location>
        <begin position="57"/>
        <end position="91"/>
    </location>
</feature>
<feature type="region of interest" description="Linker 1">
    <location>
        <begin position="92"/>
        <end position="102"/>
    </location>
</feature>
<feature type="region of interest" description="Coil 1B">
    <location>
        <begin position="103"/>
        <end position="203"/>
    </location>
</feature>
<feature type="region of interest" description="Linker 12">
    <location>
        <begin position="204"/>
        <end position="219"/>
    </location>
</feature>
<feature type="region of interest" description="Coil 2">
    <location>
        <begin position="220"/>
        <end position="363"/>
    </location>
</feature>
<feature type="region of interest" description="Tail">
    <location>
        <begin position="364"/>
        <end position="416"/>
    </location>
</feature>
<feature type="site" description="Stutter">
    <location>
        <position position="305"/>
    </location>
</feature>
<feature type="sequence conflict" description="In Ref. 1; AAA39372." evidence="2" ref="1">
    <original>QL</original>
    <variation>HV</variation>
    <location>
        <begin position="153"/>
        <end position="154"/>
    </location>
</feature>
<gene>
    <name type="primary">Krt31</name>
    <name type="synonym">Hka1</name>
    <name type="synonym">Krt1-1</name>
    <name type="synonym">Krtha1</name>
</gene>
<sequence length="416" mass="47117">MPYNCCLPALSCRTSCSSRPCVPPSCHGCTLPGACNIPANVGNCNWFCEGSFNGNEKETMQFLNDRLASYMEKVRQLERENAELECRIQERNQQQDPLVCPAYQAYFRTIEELQQKILCSKSENARLVVQIDNAKLAADDFRTKYETELGLRQLVESDINGLRRILDELTLCKSDLEAQVESLKEELLCLKRNHEEEVNTLRCQLGDRLNVEVDAAPTVDLNRVLNETRCQYEAMVETNRREVEEWFTTQTEELNKQVVSSSEQLQSCQAEIIELRRTVNALEIELQAQHCMRNSLENTLTESEARYSSQLSQVQCLITNVESQLGEIRADLERQNQEYQVLLDVKARLECEINTYRGLLESEDCKLPCNPCATSNACGKPIGPCVSNPCVPCPPPAPCTPCVPRPRCGPCNSFVR</sequence>
<name>K1H1_MOUSE</name>
<accession>Q61765</accession>
<accession>A2A5Y0</accession>
<evidence type="ECO:0000255" key="1">
    <source>
        <dbReference type="PROSITE-ProRule" id="PRU01188"/>
    </source>
</evidence>
<evidence type="ECO:0000305" key="2"/>
<proteinExistence type="evidence at protein level"/>
<reference key="1">
    <citation type="journal article" date="1988" name="J. Invest. Dermatol.">
        <title>Cloning and characterization of a mouse type I hair keratin cDNA.</title>
        <authorList>
            <person name="Bertolino A.P."/>
            <person name="Checkla D.M."/>
            <person name="Notterman R."/>
            <person name="Sklaver I."/>
            <person name="Schiff T.A."/>
            <person name="Freedberg I.M."/>
            <person name="Didona G.J."/>
        </authorList>
    </citation>
    <scope>NUCLEOTIDE SEQUENCE [MRNA]</scope>
    <source>
        <strain>C57BL/6J</strain>
        <tissue>Hair root</tissue>
    </source>
</reference>
<reference key="2">
    <citation type="journal article" date="2009" name="PLoS Biol.">
        <title>Lineage-specific biology revealed by a finished genome assembly of the mouse.</title>
        <authorList>
            <person name="Church D.M."/>
            <person name="Goodstadt L."/>
            <person name="Hillier L.W."/>
            <person name="Zody M.C."/>
            <person name="Goldstein S."/>
            <person name="She X."/>
            <person name="Bult C.J."/>
            <person name="Agarwala R."/>
            <person name="Cherry J.L."/>
            <person name="DiCuccio M."/>
            <person name="Hlavina W."/>
            <person name="Kapustin Y."/>
            <person name="Meric P."/>
            <person name="Maglott D."/>
            <person name="Birtle Z."/>
            <person name="Marques A.C."/>
            <person name="Graves T."/>
            <person name="Zhou S."/>
            <person name="Teague B."/>
            <person name="Potamousis K."/>
            <person name="Churas C."/>
            <person name="Place M."/>
            <person name="Herschleb J."/>
            <person name="Runnheim R."/>
            <person name="Forrest D."/>
            <person name="Amos-Landgraf J."/>
            <person name="Schwartz D.C."/>
            <person name="Cheng Z."/>
            <person name="Lindblad-Toh K."/>
            <person name="Eichler E.E."/>
            <person name="Ponting C.P."/>
        </authorList>
    </citation>
    <scope>NUCLEOTIDE SEQUENCE [LARGE SCALE GENOMIC DNA]</scope>
    <source>
        <strain>C57BL/6J</strain>
    </source>
</reference>
<reference key="3">
    <citation type="journal article" date="2010" name="Cell">
        <title>A tissue-specific atlas of mouse protein phosphorylation and expression.</title>
        <authorList>
            <person name="Huttlin E.L."/>
            <person name="Jedrychowski M.P."/>
            <person name="Elias J.E."/>
            <person name="Goswami T."/>
            <person name="Rad R."/>
            <person name="Beausoleil S.A."/>
            <person name="Villen J."/>
            <person name="Haas W."/>
            <person name="Sowa M.E."/>
            <person name="Gygi S.P."/>
        </authorList>
    </citation>
    <scope>IDENTIFICATION BY MASS SPECTROMETRY [LARGE SCALE ANALYSIS]</scope>
    <source>
        <tissue>Heart</tissue>
        <tissue>Kidney</tissue>
        <tissue>Liver</tissue>
    </source>
</reference>